<evidence type="ECO:0000255" key="1">
    <source>
        <dbReference type="HAMAP-Rule" id="MF_00083"/>
    </source>
</evidence>
<evidence type="ECO:0000305" key="2"/>
<proteinExistence type="inferred from homology"/>
<gene>
    <name evidence="1" type="primary">pth</name>
    <name type="ordered locus">BC_0056</name>
</gene>
<sequence>MKLIVGLGNPGREYELTRHNIGFMAIDELAKRWNISLNEQKFKGVFGAGFVNGEKVILLKPLTYMNLSGESIRPLMDYYKIDVEDFVVMYDDLDIPVGKLRLRMKGSAGGHNGVKSTISHLGTQEFQRIRMGIDRPKNGMKVVDYVLGRFTSEEIPDVNHSIEKAADACEEWLNKPFLQIMNTFNS</sequence>
<dbReference type="EC" id="3.1.1.29" evidence="1"/>
<dbReference type="EMBL" id="AE016877">
    <property type="protein sequence ID" value="AAP07154.1"/>
    <property type="status" value="ALT_INIT"/>
    <property type="molecule type" value="Genomic_DNA"/>
</dbReference>
<dbReference type="RefSeq" id="NP_829953.1">
    <property type="nucleotide sequence ID" value="NC_004722.1"/>
</dbReference>
<dbReference type="RefSeq" id="WP_000767702.1">
    <property type="nucleotide sequence ID" value="NZ_CP138336.1"/>
</dbReference>
<dbReference type="SMR" id="Q81J96"/>
<dbReference type="STRING" id="226900.BC_0056"/>
<dbReference type="GeneID" id="72446852"/>
<dbReference type="KEGG" id="bce:BC0056"/>
<dbReference type="PATRIC" id="fig|226900.8.peg.73"/>
<dbReference type="HOGENOM" id="CLU_062456_4_1_9"/>
<dbReference type="Proteomes" id="UP000001417">
    <property type="component" value="Chromosome"/>
</dbReference>
<dbReference type="GO" id="GO:0005737">
    <property type="term" value="C:cytoplasm"/>
    <property type="evidence" value="ECO:0007669"/>
    <property type="project" value="UniProtKB-SubCell"/>
</dbReference>
<dbReference type="GO" id="GO:0004045">
    <property type="term" value="F:peptidyl-tRNA hydrolase activity"/>
    <property type="evidence" value="ECO:0000318"/>
    <property type="project" value="GO_Central"/>
</dbReference>
<dbReference type="GO" id="GO:0000049">
    <property type="term" value="F:tRNA binding"/>
    <property type="evidence" value="ECO:0007669"/>
    <property type="project" value="UniProtKB-UniRule"/>
</dbReference>
<dbReference type="GO" id="GO:0006515">
    <property type="term" value="P:protein quality control for misfolded or incompletely synthesized proteins"/>
    <property type="evidence" value="ECO:0007669"/>
    <property type="project" value="UniProtKB-UniRule"/>
</dbReference>
<dbReference type="GO" id="GO:0072344">
    <property type="term" value="P:rescue of stalled ribosome"/>
    <property type="evidence" value="ECO:0007669"/>
    <property type="project" value="UniProtKB-UniRule"/>
</dbReference>
<dbReference type="CDD" id="cd00462">
    <property type="entry name" value="PTH"/>
    <property type="match status" value="1"/>
</dbReference>
<dbReference type="FunFam" id="3.40.50.1470:FF:000001">
    <property type="entry name" value="Peptidyl-tRNA hydrolase"/>
    <property type="match status" value="1"/>
</dbReference>
<dbReference type="Gene3D" id="3.40.50.1470">
    <property type="entry name" value="Peptidyl-tRNA hydrolase"/>
    <property type="match status" value="1"/>
</dbReference>
<dbReference type="HAMAP" id="MF_00083">
    <property type="entry name" value="Pept_tRNA_hydro_bact"/>
    <property type="match status" value="1"/>
</dbReference>
<dbReference type="InterPro" id="IPR001328">
    <property type="entry name" value="Pept_tRNA_hydro"/>
</dbReference>
<dbReference type="InterPro" id="IPR018171">
    <property type="entry name" value="Pept_tRNA_hydro_CS"/>
</dbReference>
<dbReference type="InterPro" id="IPR036416">
    <property type="entry name" value="Pept_tRNA_hydro_sf"/>
</dbReference>
<dbReference type="NCBIfam" id="TIGR00447">
    <property type="entry name" value="pth"/>
    <property type="match status" value="1"/>
</dbReference>
<dbReference type="PANTHER" id="PTHR17224">
    <property type="entry name" value="PEPTIDYL-TRNA HYDROLASE"/>
    <property type="match status" value="1"/>
</dbReference>
<dbReference type="PANTHER" id="PTHR17224:SF1">
    <property type="entry name" value="PEPTIDYL-TRNA HYDROLASE"/>
    <property type="match status" value="1"/>
</dbReference>
<dbReference type="Pfam" id="PF01195">
    <property type="entry name" value="Pept_tRNA_hydro"/>
    <property type="match status" value="1"/>
</dbReference>
<dbReference type="SUPFAM" id="SSF53178">
    <property type="entry name" value="Peptidyl-tRNA hydrolase-like"/>
    <property type="match status" value="1"/>
</dbReference>
<dbReference type="PROSITE" id="PS01195">
    <property type="entry name" value="PEPT_TRNA_HYDROL_1"/>
    <property type="match status" value="1"/>
</dbReference>
<dbReference type="PROSITE" id="PS01196">
    <property type="entry name" value="PEPT_TRNA_HYDROL_2"/>
    <property type="match status" value="1"/>
</dbReference>
<name>PTH_BACCR</name>
<keyword id="KW-0963">Cytoplasm</keyword>
<keyword id="KW-0378">Hydrolase</keyword>
<keyword id="KW-1185">Reference proteome</keyword>
<keyword id="KW-0694">RNA-binding</keyword>
<keyword id="KW-0820">tRNA-binding</keyword>
<comment type="function">
    <text evidence="1">Hydrolyzes ribosome-free peptidyl-tRNAs (with 1 or more amino acids incorporated), which drop off the ribosome during protein synthesis, or as a result of ribosome stalling.</text>
</comment>
<comment type="function">
    <text evidence="1">Catalyzes the release of premature peptidyl moieties from peptidyl-tRNA molecules trapped in stalled 50S ribosomal subunits, and thus maintains levels of free tRNAs and 50S ribosomes.</text>
</comment>
<comment type="catalytic activity">
    <reaction evidence="1">
        <text>an N-acyl-L-alpha-aminoacyl-tRNA + H2O = an N-acyl-L-amino acid + a tRNA + H(+)</text>
        <dbReference type="Rhea" id="RHEA:54448"/>
        <dbReference type="Rhea" id="RHEA-COMP:10123"/>
        <dbReference type="Rhea" id="RHEA-COMP:13883"/>
        <dbReference type="ChEBI" id="CHEBI:15377"/>
        <dbReference type="ChEBI" id="CHEBI:15378"/>
        <dbReference type="ChEBI" id="CHEBI:59874"/>
        <dbReference type="ChEBI" id="CHEBI:78442"/>
        <dbReference type="ChEBI" id="CHEBI:138191"/>
        <dbReference type="EC" id="3.1.1.29"/>
    </reaction>
</comment>
<comment type="subunit">
    <text evidence="1">Monomer.</text>
</comment>
<comment type="subcellular location">
    <subcellularLocation>
        <location evidence="1">Cytoplasm</location>
    </subcellularLocation>
</comment>
<comment type="similarity">
    <text evidence="1">Belongs to the PTH family.</text>
</comment>
<comment type="sequence caution" evidence="2">
    <conflict type="erroneous initiation">
        <sequence resource="EMBL-CDS" id="AAP07154"/>
    </conflict>
    <text>Extended N-terminus.</text>
</comment>
<reference key="1">
    <citation type="journal article" date="2003" name="Nature">
        <title>Genome sequence of Bacillus cereus and comparative analysis with Bacillus anthracis.</title>
        <authorList>
            <person name="Ivanova N."/>
            <person name="Sorokin A."/>
            <person name="Anderson I."/>
            <person name="Galleron N."/>
            <person name="Candelon B."/>
            <person name="Kapatral V."/>
            <person name="Bhattacharyya A."/>
            <person name="Reznik G."/>
            <person name="Mikhailova N."/>
            <person name="Lapidus A."/>
            <person name="Chu L."/>
            <person name="Mazur M."/>
            <person name="Goltsman E."/>
            <person name="Larsen N."/>
            <person name="D'Souza M."/>
            <person name="Walunas T."/>
            <person name="Grechkin Y."/>
            <person name="Pusch G."/>
            <person name="Haselkorn R."/>
            <person name="Fonstein M."/>
            <person name="Ehrlich S.D."/>
            <person name="Overbeek R."/>
            <person name="Kyrpides N.C."/>
        </authorList>
    </citation>
    <scope>NUCLEOTIDE SEQUENCE [LARGE SCALE GENOMIC DNA]</scope>
    <source>
        <strain>ATCC 14579 / DSM 31 / CCUG 7414 / JCM 2152 / NBRC 15305 / NCIMB 9373 / NCTC 2599 / NRRL B-3711</strain>
    </source>
</reference>
<organism>
    <name type="scientific">Bacillus cereus (strain ATCC 14579 / DSM 31 / CCUG 7414 / JCM 2152 / NBRC 15305 / NCIMB 9373 / NCTC 2599 / NRRL B-3711)</name>
    <dbReference type="NCBI Taxonomy" id="226900"/>
    <lineage>
        <taxon>Bacteria</taxon>
        <taxon>Bacillati</taxon>
        <taxon>Bacillota</taxon>
        <taxon>Bacilli</taxon>
        <taxon>Bacillales</taxon>
        <taxon>Bacillaceae</taxon>
        <taxon>Bacillus</taxon>
        <taxon>Bacillus cereus group</taxon>
    </lineage>
</organism>
<feature type="chain" id="PRO_0000187685" description="Peptidyl-tRNA hydrolase">
    <location>
        <begin position="1"/>
        <end position="186"/>
    </location>
</feature>
<feature type="active site" description="Proton acceptor" evidence="1">
    <location>
        <position position="19"/>
    </location>
</feature>
<feature type="binding site" evidence="1">
    <location>
        <position position="14"/>
    </location>
    <ligand>
        <name>tRNA</name>
        <dbReference type="ChEBI" id="CHEBI:17843"/>
    </ligand>
</feature>
<feature type="binding site" evidence="1">
    <location>
        <position position="64"/>
    </location>
    <ligand>
        <name>tRNA</name>
        <dbReference type="ChEBI" id="CHEBI:17843"/>
    </ligand>
</feature>
<feature type="binding site" evidence="1">
    <location>
        <position position="66"/>
    </location>
    <ligand>
        <name>tRNA</name>
        <dbReference type="ChEBI" id="CHEBI:17843"/>
    </ligand>
</feature>
<feature type="binding site" evidence="1">
    <location>
        <position position="112"/>
    </location>
    <ligand>
        <name>tRNA</name>
        <dbReference type="ChEBI" id="CHEBI:17843"/>
    </ligand>
</feature>
<feature type="site" description="Discriminates between blocked and unblocked aminoacyl-tRNA" evidence="1">
    <location>
        <position position="9"/>
    </location>
</feature>
<feature type="site" description="Stabilizes the basic form of H active site to accept a proton" evidence="1">
    <location>
        <position position="91"/>
    </location>
</feature>
<accession>Q81J96</accession>
<protein>
    <recommendedName>
        <fullName evidence="1">Peptidyl-tRNA hydrolase</fullName>
        <shortName evidence="1">Pth</shortName>
        <ecNumber evidence="1">3.1.1.29</ecNumber>
    </recommendedName>
</protein>